<comment type="similarity">
    <text evidence="1">Belongs to the UPF0304 family.</text>
</comment>
<keyword id="KW-1185">Reference proteome</keyword>
<organism>
    <name type="scientific">Escherichia coli O45:K1 (strain S88 / ExPEC)</name>
    <dbReference type="NCBI Taxonomy" id="585035"/>
    <lineage>
        <taxon>Bacteria</taxon>
        <taxon>Pseudomonadati</taxon>
        <taxon>Pseudomonadota</taxon>
        <taxon>Gammaproteobacteria</taxon>
        <taxon>Enterobacterales</taxon>
        <taxon>Enterobacteriaceae</taxon>
        <taxon>Escherichia</taxon>
    </lineage>
</organism>
<reference key="1">
    <citation type="journal article" date="2009" name="PLoS Genet.">
        <title>Organised genome dynamics in the Escherichia coli species results in highly diverse adaptive paths.</title>
        <authorList>
            <person name="Touchon M."/>
            <person name="Hoede C."/>
            <person name="Tenaillon O."/>
            <person name="Barbe V."/>
            <person name="Baeriswyl S."/>
            <person name="Bidet P."/>
            <person name="Bingen E."/>
            <person name="Bonacorsi S."/>
            <person name="Bouchier C."/>
            <person name="Bouvet O."/>
            <person name="Calteau A."/>
            <person name="Chiapello H."/>
            <person name="Clermont O."/>
            <person name="Cruveiller S."/>
            <person name="Danchin A."/>
            <person name="Diard M."/>
            <person name="Dossat C."/>
            <person name="Karoui M.E."/>
            <person name="Frapy E."/>
            <person name="Garry L."/>
            <person name="Ghigo J.M."/>
            <person name="Gilles A.M."/>
            <person name="Johnson J."/>
            <person name="Le Bouguenec C."/>
            <person name="Lescat M."/>
            <person name="Mangenot S."/>
            <person name="Martinez-Jehanne V."/>
            <person name="Matic I."/>
            <person name="Nassif X."/>
            <person name="Oztas S."/>
            <person name="Petit M.A."/>
            <person name="Pichon C."/>
            <person name="Rouy Z."/>
            <person name="Ruf C.S."/>
            <person name="Schneider D."/>
            <person name="Tourret J."/>
            <person name="Vacherie B."/>
            <person name="Vallenet D."/>
            <person name="Medigue C."/>
            <person name="Rocha E.P.C."/>
            <person name="Denamur E."/>
        </authorList>
    </citation>
    <scope>NUCLEOTIDE SEQUENCE [LARGE SCALE GENOMIC DNA]</scope>
    <source>
        <strain>S88 / ExPEC</strain>
    </source>
</reference>
<name>YFBU_ECO45</name>
<accession>B7MG58</accession>
<protein>
    <recommendedName>
        <fullName evidence="1">UPF0304 protein YfbU</fullName>
    </recommendedName>
</protein>
<dbReference type="EMBL" id="CU928161">
    <property type="protein sequence ID" value="CAR03720.1"/>
    <property type="molecule type" value="Genomic_DNA"/>
</dbReference>
<dbReference type="RefSeq" id="WP_000426124.1">
    <property type="nucleotide sequence ID" value="NC_011742.1"/>
</dbReference>
<dbReference type="SMR" id="B7MG58"/>
<dbReference type="KEGG" id="ecz:ECS88_2441"/>
<dbReference type="HOGENOM" id="CLU_101021_1_0_6"/>
<dbReference type="Proteomes" id="UP000000747">
    <property type="component" value="Chromosome"/>
</dbReference>
<dbReference type="FunFam" id="1.10.3190.10:FF:000001">
    <property type="entry name" value="UPF0304 protein YfbU"/>
    <property type="match status" value="1"/>
</dbReference>
<dbReference type="Gene3D" id="1.10.287.680">
    <property type="entry name" value="Helix hairpin bin"/>
    <property type="match status" value="1"/>
</dbReference>
<dbReference type="Gene3D" id="1.10.3190.10">
    <property type="entry name" value="yfbu gene product, domain 2"/>
    <property type="match status" value="1"/>
</dbReference>
<dbReference type="HAMAP" id="MF_00762">
    <property type="entry name" value="UPF0304"/>
    <property type="match status" value="1"/>
</dbReference>
<dbReference type="InterPro" id="IPR005587">
    <property type="entry name" value="UPF0304_YfbU"/>
</dbReference>
<dbReference type="InterPro" id="IPR023146">
    <property type="entry name" value="YfbU_alpha-helical_sf"/>
</dbReference>
<dbReference type="InterPro" id="IPR023145">
    <property type="entry name" value="YfbU_helix-hairpin_sf"/>
</dbReference>
<dbReference type="NCBIfam" id="NF003936">
    <property type="entry name" value="PRK05445.1"/>
    <property type="match status" value="1"/>
</dbReference>
<dbReference type="Pfam" id="PF03887">
    <property type="entry name" value="YfbU"/>
    <property type="match status" value="1"/>
</dbReference>
<dbReference type="PIRSF" id="PIRSF006272">
    <property type="entry name" value="UCP006272"/>
    <property type="match status" value="1"/>
</dbReference>
<dbReference type="SUPFAM" id="SSF116960">
    <property type="entry name" value="YfbU-like"/>
    <property type="match status" value="1"/>
</dbReference>
<proteinExistence type="inferred from homology"/>
<sequence>MEMTNAQRLILSNQYKMMTMLDPANAERYRRLQTIIERGYGLQMRELDREFGELKEETCRTIIDIMEMYHALHVSWSNLQDQQSIDERRVTFLGFDAATEARYLGYVRFMVNVEGRYTHFDAGTHGFNAQTPMWEKYQRMLNVWHACPRQYHLSANEINQIINA</sequence>
<evidence type="ECO:0000255" key="1">
    <source>
        <dbReference type="HAMAP-Rule" id="MF_00762"/>
    </source>
</evidence>
<feature type="chain" id="PRO_1000198338" description="UPF0304 protein YfbU">
    <location>
        <begin position="1"/>
        <end position="164"/>
    </location>
</feature>
<gene>
    <name evidence="1" type="primary">yfbU</name>
    <name type="ordered locus">ECS88_2441</name>
</gene>